<name>PTPN3_MDBVW</name>
<organism>
    <name type="scientific">Microplitis demolitor bracovirus (isolate Webb)</name>
    <name type="common">MdBV</name>
    <dbReference type="NCBI Taxonomy" id="654919"/>
    <lineage>
        <taxon>Viruses</taxon>
        <taxon>Viruses incertae sedis</taxon>
        <taxon>Polydnaviriformidae</taxon>
        <taxon>Bracoviriform</taxon>
        <taxon>Microplitis demolitor bracovirus</taxon>
    </lineage>
</organism>
<accession>Q5I124</accession>
<proteinExistence type="inferred from homology"/>
<dbReference type="EMBL" id="AY875689">
    <property type="protein sequence ID" value="AAW51808.1"/>
    <property type="molecule type" value="Genomic_DNA"/>
</dbReference>
<dbReference type="RefSeq" id="YP_239404.1">
    <property type="nucleotide sequence ID" value="NC_007039.1"/>
</dbReference>
<dbReference type="KEGG" id="vg:5075834"/>
<dbReference type="Proteomes" id="UP000008168">
    <property type="component" value="Genome"/>
</dbReference>
<dbReference type="GO" id="GO:0004725">
    <property type="term" value="F:protein tyrosine phosphatase activity"/>
    <property type="evidence" value="ECO:0007669"/>
    <property type="project" value="InterPro"/>
</dbReference>
<dbReference type="CDD" id="cd00047">
    <property type="entry name" value="PTPc"/>
    <property type="match status" value="1"/>
</dbReference>
<dbReference type="Gene3D" id="3.90.190.10">
    <property type="entry name" value="Protein tyrosine phosphatase superfamily"/>
    <property type="match status" value="1"/>
</dbReference>
<dbReference type="InterPro" id="IPR029021">
    <property type="entry name" value="Prot-tyrosine_phosphatase-like"/>
</dbReference>
<dbReference type="InterPro" id="IPR050348">
    <property type="entry name" value="Protein-Tyr_Phosphatase"/>
</dbReference>
<dbReference type="InterPro" id="IPR000242">
    <property type="entry name" value="PTP_cat"/>
</dbReference>
<dbReference type="InterPro" id="IPR003595">
    <property type="entry name" value="Tyr_Pase_cat"/>
</dbReference>
<dbReference type="PANTHER" id="PTHR19134">
    <property type="entry name" value="RECEPTOR-TYPE TYROSINE-PROTEIN PHOSPHATASE"/>
    <property type="match status" value="1"/>
</dbReference>
<dbReference type="PANTHER" id="PTHR19134:SF449">
    <property type="entry name" value="TYROSINE-PROTEIN PHOSPHATASE 1"/>
    <property type="match status" value="1"/>
</dbReference>
<dbReference type="Pfam" id="PF00102">
    <property type="entry name" value="Y_phosphatase"/>
    <property type="match status" value="1"/>
</dbReference>
<dbReference type="SMART" id="SM00194">
    <property type="entry name" value="PTPc"/>
    <property type="match status" value="1"/>
</dbReference>
<dbReference type="SMART" id="SM00404">
    <property type="entry name" value="PTPc_motif"/>
    <property type="match status" value="1"/>
</dbReference>
<dbReference type="SUPFAM" id="SSF52799">
    <property type="entry name" value="(Phosphotyrosine protein) phosphatases II"/>
    <property type="match status" value="1"/>
</dbReference>
<dbReference type="PROSITE" id="PS50055">
    <property type="entry name" value="TYR_PHOSPHATASE_PTP"/>
    <property type="match status" value="1"/>
</dbReference>
<evidence type="ECO:0000255" key="1">
    <source>
        <dbReference type="PROSITE-ProRule" id="PRU00160"/>
    </source>
</evidence>
<evidence type="ECO:0000305" key="2"/>
<gene>
    <name type="primary">N7</name>
</gene>
<comment type="similarity">
    <text evidence="2">Belongs to the protein-tyrosine phosphatase family.</text>
</comment>
<comment type="caution">
    <text evidence="2">PTP-N3 does not appear to be a functional PTP.</text>
</comment>
<sequence length="319" mass="37940">MYAERSSNLSIHEFWRRKSSKYMKTIKSEHLFVNHTCWYEETPETKKRNRXHRHRSSVKSIQSLEPSVNGSDSFYASYVDGYDLKRKFIVVETLTSEKKSRNYWKLIWETNCRVIVRFDINDWKNCQYWLHNHISDYTEGEFNVWKKKTISHNYYTEILLTVANKKNGKSKQITHYEYHEHPDGKLPIESARFIFFLKMVNKSQENYNISASSSNKCARTPIVVHSVGRYERAISFCALDICLNQIRETKSVSVPSVLLKIKGQTQLDFFSFEEYLIINKILLHSKWALELKTEDDGKTSFFRSRVRKYCLIFKRASVF</sequence>
<reference key="1">
    <citation type="journal article" date="2006" name="Virology">
        <title>Polydnavirus genomes reflect their dual roles as mutualists and pathogens.</title>
        <authorList>
            <person name="Webb B.A."/>
            <person name="Strand M.R."/>
            <person name="Dickey S.E."/>
            <person name="Beck M.H."/>
            <person name="Hilgarth R.S."/>
            <person name="Barney W.E."/>
            <person name="Kadash K."/>
            <person name="Kroemer J.A."/>
            <person name="Lindstrom K.G."/>
            <person name="Rattanadechakul W."/>
            <person name="Shelby K.S."/>
            <person name="Thoetkiattikul H."/>
            <person name="Turnbull M.W."/>
            <person name="Witherell R.A."/>
        </authorList>
    </citation>
    <scope>NUCLEOTIDE SEQUENCE [GENOMIC DNA]</scope>
</reference>
<feature type="chain" id="PRO_0000405377" description="Tyrosine phosphatase-like protein N3">
    <location>
        <begin position="1"/>
        <end position="319"/>
    </location>
</feature>
<feature type="domain" description="Tyrosine-protein phosphatase" evidence="1">
    <location>
        <begin position="7"/>
        <end position="285"/>
    </location>
</feature>
<keyword id="KW-1185">Reference proteome</keyword>
<organismHost>
    <name type="scientific">Microplitis demolitor</name>
    <name type="common">Parasitoid wasp</name>
    <dbReference type="NCBI Taxonomy" id="69319"/>
</organismHost>
<protein>
    <recommendedName>
        <fullName>Tyrosine phosphatase-like protein N3</fullName>
        <shortName>PTP-N3</shortName>
    </recommendedName>
</protein>